<dbReference type="EMBL" id="M76426">
    <property type="protein sequence ID" value="AAC42061.1"/>
    <property type="molecule type" value="mRNA"/>
</dbReference>
<dbReference type="EMBL" id="M76427">
    <property type="protein sequence ID" value="AAC42062.1"/>
    <property type="molecule type" value="mRNA"/>
</dbReference>
<dbReference type="RefSeq" id="NP_074041.1">
    <property type="nucleotide sequence ID" value="NM_022850.1"/>
</dbReference>
<dbReference type="SMR" id="P46101"/>
<dbReference type="BioGRID" id="247943">
    <property type="interactions" value="1"/>
</dbReference>
<dbReference type="CORUM" id="P46101"/>
<dbReference type="FunCoup" id="P46101">
    <property type="interactions" value="1323"/>
</dbReference>
<dbReference type="STRING" id="10116.ENSRNOP00000043113"/>
<dbReference type="ESTHER" id="ratno-dpp6">
    <property type="family name" value="DPP4N_Peptidase_S9"/>
</dbReference>
<dbReference type="MEROPS" id="S09.973"/>
<dbReference type="GlyCosmos" id="P46101">
    <property type="glycosylation" value="8 sites, 16 glycans"/>
</dbReference>
<dbReference type="GlyGen" id="P46101">
    <property type="glycosylation" value="8 sites, 16 N-linked glycans (4 sites), 5 N-linked;o-linked glycans (3 sites)"/>
</dbReference>
<dbReference type="iPTMnet" id="P46101"/>
<dbReference type="PhosphoSitePlus" id="P46101"/>
<dbReference type="PaxDb" id="10116-ENSRNOP00000043113"/>
<dbReference type="GeneID" id="29272"/>
<dbReference type="KEGG" id="rno:29272"/>
<dbReference type="AGR" id="RGD:68402"/>
<dbReference type="CTD" id="1804"/>
<dbReference type="RGD" id="68402">
    <property type="gene designation" value="Dpp6"/>
</dbReference>
<dbReference type="eggNOG" id="KOG2100">
    <property type="taxonomic scope" value="Eukaryota"/>
</dbReference>
<dbReference type="InParanoid" id="P46101"/>
<dbReference type="PhylomeDB" id="P46101"/>
<dbReference type="PRO" id="PR:P46101"/>
<dbReference type="Proteomes" id="UP000002494">
    <property type="component" value="Unplaced"/>
</dbReference>
<dbReference type="GO" id="GO:0009986">
    <property type="term" value="C:cell surface"/>
    <property type="evidence" value="ECO:0000314"/>
    <property type="project" value="RGD"/>
</dbReference>
<dbReference type="GO" id="GO:0016020">
    <property type="term" value="C:membrane"/>
    <property type="evidence" value="ECO:0000266"/>
    <property type="project" value="RGD"/>
</dbReference>
<dbReference type="GO" id="GO:0043025">
    <property type="term" value="C:neuronal cell body"/>
    <property type="evidence" value="ECO:0000314"/>
    <property type="project" value="RGD"/>
</dbReference>
<dbReference type="GO" id="GO:0005886">
    <property type="term" value="C:plasma membrane"/>
    <property type="evidence" value="ECO:0000266"/>
    <property type="project" value="RGD"/>
</dbReference>
<dbReference type="GO" id="GO:0045202">
    <property type="term" value="C:synapse"/>
    <property type="evidence" value="ECO:0000266"/>
    <property type="project" value="RGD"/>
</dbReference>
<dbReference type="GO" id="GO:0008076">
    <property type="term" value="C:voltage-gated potassium channel complex"/>
    <property type="evidence" value="ECO:0000314"/>
    <property type="project" value="RGD"/>
</dbReference>
<dbReference type="GO" id="GO:0015459">
    <property type="term" value="F:potassium channel regulator activity"/>
    <property type="evidence" value="ECO:0000250"/>
    <property type="project" value="UniProtKB"/>
</dbReference>
<dbReference type="GO" id="GO:0008236">
    <property type="term" value="F:serine-type peptidase activity"/>
    <property type="evidence" value="ECO:0007669"/>
    <property type="project" value="InterPro"/>
</dbReference>
<dbReference type="GO" id="GO:0051649">
    <property type="term" value="P:establishment of localization in cell"/>
    <property type="evidence" value="ECO:0000266"/>
    <property type="project" value="RGD"/>
</dbReference>
<dbReference type="GO" id="GO:0019228">
    <property type="term" value="P:neuronal action potential"/>
    <property type="evidence" value="ECO:0000266"/>
    <property type="project" value="RGD"/>
</dbReference>
<dbReference type="GO" id="GO:1901381">
    <property type="term" value="P:positive regulation of potassium ion transmembrane transport"/>
    <property type="evidence" value="ECO:0000266"/>
    <property type="project" value="RGD"/>
</dbReference>
<dbReference type="GO" id="GO:0043268">
    <property type="term" value="P:positive regulation of potassium ion transport"/>
    <property type="evidence" value="ECO:0000315"/>
    <property type="project" value="RGD"/>
</dbReference>
<dbReference type="GO" id="GO:1903078">
    <property type="term" value="P:positive regulation of protein localization to plasma membrane"/>
    <property type="evidence" value="ECO:0000314"/>
    <property type="project" value="CACAO"/>
</dbReference>
<dbReference type="GO" id="GO:0071805">
    <property type="term" value="P:potassium ion transmembrane transport"/>
    <property type="evidence" value="ECO:0000266"/>
    <property type="project" value="RGD"/>
</dbReference>
<dbReference type="GO" id="GO:0072659">
    <property type="term" value="P:protein localization to plasma membrane"/>
    <property type="evidence" value="ECO:0000250"/>
    <property type="project" value="UniProtKB"/>
</dbReference>
<dbReference type="GO" id="GO:0006508">
    <property type="term" value="P:proteolysis"/>
    <property type="evidence" value="ECO:0007669"/>
    <property type="project" value="InterPro"/>
</dbReference>
<dbReference type="GO" id="GO:0042391">
    <property type="term" value="P:regulation of membrane potential"/>
    <property type="evidence" value="ECO:0000266"/>
    <property type="project" value="RGD"/>
</dbReference>
<dbReference type="GO" id="GO:0060078">
    <property type="term" value="P:regulation of postsynaptic membrane potential"/>
    <property type="evidence" value="ECO:0000266"/>
    <property type="project" value="RGD"/>
</dbReference>
<dbReference type="GO" id="GO:1901379">
    <property type="term" value="P:regulation of potassium ion transmembrane transport"/>
    <property type="evidence" value="ECO:0000250"/>
    <property type="project" value="UniProtKB"/>
</dbReference>
<dbReference type="GO" id="GO:0043266">
    <property type="term" value="P:regulation of potassium ion transport"/>
    <property type="evidence" value="ECO:0000266"/>
    <property type="project" value="RGD"/>
</dbReference>
<dbReference type="FunFam" id="2.140.10.30:FF:000001">
    <property type="entry name" value="Dipeptidyl peptidase 4"/>
    <property type="match status" value="1"/>
</dbReference>
<dbReference type="FunFam" id="3.40.50.1820:FF:000003">
    <property type="entry name" value="Dipeptidyl peptidase 4"/>
    <property type="match status" value="1"/>
</dbReference>
<dbReference type="Gene3D" id="3.40.50.1820">
    <property type="entry name" value="alpha/beta hydrolase"/>
    <property type="match status" value="1"/>
</dbReference>
<dbReference type="Gene3D" id="2.140.10.30">
    <property type="entry name" value="Dipeptidylpeptidase IV, N-terminal domain"/>
    <property type="match status" value="1"/>
</dbReference>
<dbReference type="InterPro" id="IPR029058">
    <property type="entry name" value="AB_hydrolase_fold"/>
</dbReference>
<dbReference type="InterPro" id="IPR001375">
    <property type="entry name" value="Peptidase_S9_cat"/>
</dbReference>
<dbReference type="InterPro" id="IPR002469">
    <property type="entry name" value="Peptidase_S9B_N"/>
</dbReference>
<dbReference type="InterPro" id="IPR050278">
    <property type="entry name" value="Serine_Prot_S9B/DPPIV"/>
</dbReference>
<dbReference type="PANTHER" id="PTHR11731:SF20">
    <property type="entry name" value="DIPEPTIDYL AMINOPEPTIDASE-LIKE PROTEIN 6"/>
    <property type="match status" value="1"/>
</dbReference>
<dbReference type="PANTHER" id="PTHR11731">
    <property type="entry name" value="PROTEASE FAMILY S9B,C DIPEPTIDYL-PEPTIDASE IV-RELATED"/>
    <property type="match status" value="1"/>
</dbReference>
<dbReference type="Pfam" id="PF00930">
    <property type="entry name" value="DPPIV_N"/>
    <property type="match status" value="1"/>
</dbReference>
<dbReference type="Pfam" id="PF00326">
    <property type="entry name" value="Peptidase_S9"/>
    <property type="match status" value="1"/>
</dbReference>
<dbReference type="SUPFAM" id="SSF53474">
    <property type="entry name" value="alpha/beta-Hydrolases"/>
    <property type="match status" value="1"/>
</dbReference>
<dbReference type="SUPFAM" id="SSF82171">
    <property type="entry name" value="DPP6 N-terminal domain-like"/>
    <property type="match status" value="1"/>
</dbReference>
<evidence type="ECO:0000250" key="1"/>
<evidence type="ECO:0000250" key="2">
    <source>
        <dbReference type="UniProtKB" id="P42658"/>
    </source>
</evidence>
<evidence type="ECO:0000250" key="3">
    <source>
        <dbReference type="UniProtKB" id="Q9Z218"/>
    </source>
</evidence>
<evidence type="ECO:0000255" key="4"/>
<evidence type="ECO:0000256" key="5">
    <source>
        <dbReference type="SAM" id="MobiDB-lite"/>
    </source>
</evidence>
<evidence type="ECO:0000269" key="6">
    <source>
    </source>
</evidence>
<evidence type="ECO:0000269" key="7">
    <source>
    </source>
</evidence>
<evidence type="ECO:0000269" key="8">
    <source>
    </source>
</evidence>
<evidence type="ECO:0000269" key="9">
    <source>
    </source>
</evidence>
<evidence type="ECO:0000269" key="10">
    <source>
    </source>
</evidence>
<evidence type="ECO:0000303" key="11">
    <source>
    </source>
</evidence>
<evidence type="ECO:0000305" key="12"/>
<evidence type="ECO:0000312" key="13">
    <source>
        <dbReference type="RGD" id="68402"/>
    </source>
</evidence>
<evidence type="ECO:0007744" key="14">
    <source>
    </source>
</evidence>
<protein>
    <recommendedName>
        <fullName evidence="12">A-type potassium channel modulatory protein DPP6</fullName>
    </recommendedName>
    <alternativeName>
        <fullName>DPPX</fullName>
    </alternativeName>
    <alternativeName>
        <fullName>Dipeptidyl aminopeptidase-like protein 6</fullName>
    </alternativeName>
    <alternativeName>
        <fullName>Dipeptidyl aminopeptidase-related protein</fullName>
    </alternativeName>
    <alternativeName>
        <fullName>Dipeptidyl peptidase 6</fullName>
    </alternativeName>
    <alternativeName>
        <fullName>Dipeptidyl peptidase IV-like protein</fullName>
    </alternativeName>
    <alternativeName>
        <fullName>Dipeptidyl peptidase VI</fullName>
        <shortName>DPP VI</shortName>
    </alternativeName>
</protein>
<sequence>MASLYQRFTGKINTSRSFPAPPEASHLLGGQGPEEDAGSKPLGPQAQAVAPRERGGAGGRPRFQYQARSDCDEEDELVGSNPPQRNWKGIAIALLVILVICSLIVTSVILLTPAEDTSLSQKKKVTVEDLFSEDFKIHDPEAKWISDKEFIYRERKGSVILRNVETNNSTVLIEGKKIESLRAIRYEISPDKEYALFSYNVEPVYQHSHTGYYVLSKIPHGDPQSLDPPEVSNAKLQYAGWGPKGQQLIFIFENNIYYCAHVGKQAIRVVSTGKEGVIYNGLSDWLYEEEILKSHIAHWWSPDGTRLAYATINDSRVPLMELPTYTGSVYPTVKPYHYPKAGSENPSISLHVIGLNGPTHDLEMMPPDDPRMREYYITMVKWATSTKVAVTWLNRAQNVSILTLCDATTGVCTKKHEDESEAWLHRQNEEPVFSKDGRKFFFVRAIPQGGRGKFYHITVSSSQPNSSNDNIQSITSGDWDVTEILTYDEKRNKLYFLSTEDLPRRRHLYSANTVDDFNRQCLSCDLVENCTYVSASFSHNMDFFLLKCEGPGVPTVTVHNTTDKRRMFDLEANEQVQKAIYDRQMPKIEYRKIEVEDYSLPMQILKPATFTDTAHYPLLLVVDGTPGSQSVSERFEVTWETVLVSSHGAVVVKCDGRGSGFQGTKLLHEVRRRLGFLEEKDQMEAVRTMLKEQYIDKTRVAVFGKDYGGYLSTYILPAKGENQGQTFTCGSALSPITDFKLYASAFSERYLGLHGLDNRAYEMTKLAHRVSALEDQQFLIIHATADEKIHFQHTAELITQLIKGKANYSLQIYPDESHYFHSVALKQHLYRSIIGFFVECFRIQDKLPTATAKEDEEED</sequence>
<proteinExistence type="evidence at protein level"/>
<accession>P46101</accession>
<feature type="chain" id="PRO_0000122412" description="A-type potassium channel modulatory protein DPP6">
    <location>
        <begin position="1"/>
        <end position="859"/>
    </location>
</feature>
<feature type="topological domain" description="Cytoplasmic" evidence="4">
    <location>
        <begin position="1"/>
        <end position="89"/>
    </location>
</feature>
<feature type="transmembrane region" description="Helical; Signal-anchor for type II membrane protein" evidence="4">
    <location>
        <begin position="90"/>
        <end position="110"/>
    </location>
</feature>
<feature type="topological domain" description="Extracellular" evidence="4">
    <location>
        <begin position="111"/>
        <end position="859"/>
    </location>
</feature>
<feature type="region of interest" description="Disordered" evidence="5">
    <location>
        <begin position="1"/>
        <end position="63"/>
    </location>
</feature>
<feature type="glycosylation site" description="N-linked (GlcNAc...) asparagine" evidence="14">
    <location>
        <position position="167"/>
    </location>
</feature>
<feature type="glycosylation site" description="N-linked (GlcNAc...) asparagine" evidence="4">
    <location>
        <position position="168"/>
    </location>
</feature>
<feature type="glycosylation site" description="N-linked (GlcNAc...) asparagine" evidence="14">
    <location>
        <position position="313"/>
    </location>
</feature>
<feature type="glycosylation site" description="N-linked (GlcNAc...) asparagine" evidence="4">
    <location>
        <position position="398"/>
    </location>
</feature>
<feature type="glycosylation site" description="N-linked (GlcNAc...) asparagine" evidence="4">
    <location>
        <position position="465"/>
    </location>
</feature>
<feature type="glycosylation site" description="N-linked (GlcNAc...) asparagine" evidence="4">
    <location>
        <position position="529"/>
    </location>
</feature>
<feature type="glycosylation site" description="N-linked (GlcNAc...) asparagine" evidence="14">
    <location>
        <position position="560"/>
    </location>
</feature>
<feature type="glycosylation site" description="N-linked (GlcNAc...) asparagine" evidence="14">
    <location>
        <position position="807"/>
    </location>
</feature>
<feature type="disulfide bond" evidence="1">
    <location>
        <begin position="405"/>
        <end position="412"/>
    </location>
</feature>
<feature type="disulfide bond" evidence="1">
    <location>
        <begin position="521"/>
        <end position="524"/>
    </location>
</feature>
<feature type="disulfide bond" evidence="1">
    <location>
        <begin position="530"/>
        <end position="548"/>
    </location>
</feature>
<feature type="disulfide bond" evidence="1">
    <location>
        <begin position="729"/>
        <end position="840"/>
    </location>
</feature>
<feature type="splice variant" id="VSP_005366" description="In isoform DPPX-S." evidence="11">
    <original>MASLYQRFTGKINTSRSFPAPPEASHLLGGQGPEEDAGSKPLGPQAQAVAPRERGGAGGRPRFQYQARSDCDEED</original>
    <variation>MTTAKEPSASGKSVQQQDQ</variation>
    <location>
        <begin position="1"/>
        <end position="75"/>
    </location>
</feature>
<comment type="function">
    <text evidence="2 6 7 9 10">Regulatory subunit of Kv4/D (Shal)-type voltage-gated rapidly inactivating A-type potassium channels (PubMed:12575952, PubMed:16123112, PubMed:19279261, PubMed:19901547). Modulates the activity and gating characteristics of the potassium channel KCND2 amd KCND3 (PubMed:12575952, PubMed:16123112, PubMed:19279261, PubMed:19901547). Promotes cell surface expression of the potassium channel KCND2 (PubMed:12575952). Has no dipeptidyl aminopeptidase activity (By similarity).</text>
</comment>
<comment type="subunit">
    <text evidence="2 3 6">Homodimer (in vitro) (By similarity). Interacts with KCND2 (PubMed:12575952). Identified in a complex with KCND2 and KCNIP2. Forms an octameric complex composed of four DPP6 subunits bound to the KCND2 tetramer (By similarity). Interacts with KCND3; this interaction modulates the channel gating kinetics namely channel activation and inactivation kinetics and rate of recovery from inactivation (By similarity).</text>
</comment>
<comment type="subcellular location">
    <subcellularLocation>
        <location evidence="6">Cell membrane</location>
        <topology evidence="2">Single-pass type II membrane protein</topology>
    </subcellularLocation>
</comment>
<comment type="alternative products">
    <event type="alternative splicing"/>
    <isoform>
        <id>P46101-1</id>
        <name>DPPX-L</name>
        <sequence type="displayed"/>
    </isoform>
    <isoform>
        <id>P46101-2</id>
        <name>DPPX-S</name>
        <sequence type="described" ref="VSP_005366"/>
    </isoform>
</comment>
<comment type="tissue specificity">
    <text evidence="7 8">Detected in brain cortex, hippocampus, thalamus and cerebellum granule cells (at protein level) (PubMed:16123112). Isoform DPPX-S is expressed in brain and some peripheral tissues including kidney, ovary, and testis; in contrast isoform DPPX-L is expressed almost exclusively in brain.</text>
</comment>
<comment type="PTM">
    <text evidence="2">N-glycosylated.</text>
</comment>
<comment type="similarity">
    <text evidence="12">Belongs to the peptidase S9B family.</text>
</comment>
<organism>
    <name type="scientific">Rattus norvegicus</name>
    <name type="common">Rat</name>
    <dbReference type="NCBI Taxonomy" id="10116"/>
    <lineage>
        <taxon>Eukaryota</taxon>
        <taxon>Metazoa</taxon>
        <taxon>Chordata</taxon>
        <taxon>Craniata</taxon>
        <taxon>Vertebrata</taxon>
        <taxon>Euteleostomi</taxon>
        <taxon>Mammalia</taxon>
        <taxon>Eutheria</taxon>
        <taxon>Euarchontoglires</taxon>
        <taxon>Glires</taxon>
        <taxon>Rodentia</taxon>
        <taxon>Myomorpha</taxon>
        <taxon>Muroidea</taxon>
        <taxon>Muridae</taxon>
        <taxon>Murinae</taxon>
        <taxon>Rattus</taxon>
    </lineage>
</organism>
<name>DPP6_RAT</name>
<keyword id="KW-0025">Alternative splicing</keyword>
<keyword id="KW-1003">Cell membrane</keyword>
<keyword id="KW-1015">Disulfide bond</keyword>
<keyword id="KW-0325">Glycoprotein</keyword>
<keyword id="KW-0472">Membrane</keyword>
<keyword id="KW-1185">Reference proteome</keyword>
<keyword id="KW-0735">Signal-anchor</keyword>
<keyword id="KW-0812">Transmembrane</keyword>
<keyword id="KW-1133">Transmembrane helix</keyword>
<gene>
    <name evidence="13" type="primary">Dpp6</name>
</gene>
<reference key="1">
    <citation type="journal article" date="1992" name="Proc. Natl. Acad. Sci. U.S.A.">
        <title>Differential expression of two distinct forms of mRNA encoding members of a dipeptidyl aminopeptidase family.</title>
        <authorList>
            <person name="Wada K."/>
            <person name="Yokotani N."/>
            <person name="Hunter C."/>
            <person name="Doi K."/>
            <person name="Wenthold R.J."/>
            <person name="Shimasaki S."/>
        </authorList>
    </citation>
    <scope>NUCLEOTIDE SEQUENCE [MRNA] (ISOFORMS DPPX-L AND DPPX-S)</scope>
    <scope>TISSUE SPECIFICITY</scope>
    <source>
        <tissue>Brain</tissue>
    </source>
</reference>
<reference key="2">
    <citation type="journal article" date="2003" name="Neuron">
        <title>The CD26-related dipeptidyl aminopeptidase-like protein DPPX is a critical component of neuronal A-type K+ channels.</title>
        <authorList>
            <person name="Nadal M.S."/>
            <person name="Ozaita A."/>
            <person name="Amarillo Y."/>
            <person name="Vega-Saenz de Miera E."/>
            <person name="Ma Y."/>
            <person name="Mo W."/>
            <person name="Goldberg E.M."/>
            <person name="Misumi Y."/>
            <person name="Ikehara Y."/>
            <person name="Neubert T.A."/>
            <person name="Rudy B."/>
        </authorList>
    </citation>
    <scope>FUNCTION</scope>
    <scope>INTERACTION WITH KCND2</scope>
    <scope>SUBCELLULAR LOCATION</scope>
</reference>
<reference key="3">
    <citation type="journal article" date="2005" name="J. Physiol. (Lond.)">
        <title>Multiprotein assembly of Kv4.2, KChIP3 and DPP10 produces ternary channel complexes with ISA-like properties.</title>
        <authorList>
            <person name="Jerng H.H."/>
            <person name="Kunjilwar K."/>
            <person name="Pfaffinger P.J."/>
        </authorList>
    </citation>
    <scope>FUNCTION</scope>
    <scope>TISSUE SPECIFICITY</scope>
</reference>
<reference key="4">
    <citation type="journal article" date="2009" name="Channels">
        <title>A novel N-terminal motif of dipeptidyl peptidase-like proteins produces rapid inactivation of KV4.2 channels by a pore-blocking mechanism.</title>
        <authorList>
            <person name="Jerng H.H."/>
            <person name="Dougherty K."/>
            <person name="Covarrubias M."/>
            <person name="Pfaffinger P.J."/>
        </authorList>
    </citation>
    <scope>FUNCTION</scope>
</reference>
<reference key="5">
    <citation type="journal article" date="2009" name="J. Neurosci.">
        <title>The dipeptidyl-peptidase-like protein DPP6 determines the unitary conductance of neuronal Kv4.2 channels.</title>
        <authorList>
            <person name="Kaulin Y.A."/>
            <person name="De Santiago-Castillo J.A."/>
            <person name="Rocha C.A."/>
            <person name="Nadal M.S."/>
            <person name="Rudy B."/>
            <person name="Covarrubias M."/>
        </authorList>
    </citation>
    <scope>FUNCTION</scope>
</reference>
<reference key="6">
    <citation type="journal article" date="2013" name="J. Proteome Res.">
        <title>Site-specific glycan-peptide analysis for determination of N-glycoproteome heterogeneity.</title>
        <authorList>
            <person name="Parker B.L."/>
            <person name="Thaysen-Andersen M."/>
            <person name="Solis N."/>
            <person name="Scott N.E."/>
            <person name="Larsen M.R."/>
            <person name="Graham M.E."/>
            <person name="Packer N.H."/>
            <person name="Cordwell S.J."/>
        </authorList>
    </citation>
    <scope>GLYCOSYLATION [LARGE SCALE ANALYSIS] AT ASN-167; ASN-313; ASN-560 AND ASN-807</scope>
    <scope>IDENTIFICATION BY MASS SPECTROMETRY [LARGE SCALE ANALYSIS]</scope>
    <source>
        <tissue>Brain</tissue>
    </source>
</reference>